<organism>
    <name type="scientific">Caulobacter sp. (strain K31)</name>
    <dbReference type="NCBI Taxonomy" id="366602"/>
    <lineage>
        <taxon>Bacteria</taxon>
        <taxon>Pseudomonadati</taxon>
        <taxon>Pseudomonadota</taxon>
        <taxon>Alphaproteobacteria</taxon>
        <taxon>Caulobacterales</taxon>
        <taxon>Caulobacteraceae</taxon>
        <taxon>Caulobacter</taxon>
    </lineage>
</organism>
<accession>B0SYY1</accession>
<feature type="chain" id="PRO_1000139412" description="CTP synthase">
    <location>
        <begin position="1"/>
        <end position="550"/>
    </location>
</feature>
<feature type="domain" description="Glutamine amidotransferase type-1" evidence="1">
    <location>
        <begin position="297"/>
        <end position="549"/>
    </location>
</feature>
<feature type="region of interest" description="Amidoligase domain" evidence="1">
    <location>
        <begin position="1"/>
        <end position="271"/>
    </location>
</feature>
<feature type="active site" description="Nucleophile; for glutamine hydrolysis" evidence="1">
    <location>
        <position position="388"/>
    </location>
</feature>
<feature type="active site" evidence="1">
    <location>
        <position position="522"/>
    </location>
</feature>
<feature type="active site" evidence="1">
    <location>
        <position position="524"/>
    </location>
</feature>
<feature type="binding site" evidence="1">
    <location>
        <position position="13"/>
    </location>
    <ligand>
        <name>CTP</name>
        <dbReference type="ChEBI" id="CHEBI:37563"/>
        <note>allosteric inhibitor</note>
    </ligand>
</feature>
<feature type="binding site" evidence="1">
    <location>
        <position position="13"/>
    </location>
    <ligand>
        <name>UTP</name>
        <dbReference type="ChEBI" id="CHEBI:46398"/>
    </ligand>
</feature>
<feature type="binding site" evidence="1">
    <location>
        <begin position="14"/>
        <end position="19"/>
    </location>
    <ligand>
        <name>ATP</name>
        <dbReference type="ChEBI" id="CHEBI:30616"/>
    </ligand>
</feature>
<feature type="binding site" evidence="1">
    <location>
        <position position="54"/>
    </location>
    <ligand>
        <name>L-glutamine</name>
        <dbReference type="ChEBI" id="CHEBI:58359"/>
    </ligand>
</feature>
<feature type="binding site" evidence="1">
    <location>
        <position position="71"/>
    </location>
    <ligand>
        <name>ATP</name>
        <dbReference type="ChEBI" id="CHEBI:30616"/>
    </ligand>
</feature>
<feature type="binding site" evidence="1">
    <location>
        <position position="71"/>
    </location>
    <ligand>
        <name>Mg(2+)</name>
        <dbReference type="ChEBI" id="CHEBI:18420"/>
    </ligand>
</feature>
<feature type="binding site" evidence="1">
    <location>
        <position position="145"/>
    </location>
    <ligand>
        <name>Mg(2+)</name>
        <dbReference type="ChEBI" id="CHEBI:18420"/>
    </ligand>
</feature>
<feature type="binding site" evidence="1">
    <location>
        <begin position="152"/>
        <end position="154"/>
    </location>
    <ligand>
        <name>CTP</name>
        <dbReference type="ChEBI" id="CHEBI:37563"/>
        <note>allosteric inhibitor</note>
    </ligand>
</feature>
<feature type="binding site" evidence="1">
    <location>
        <begin position="192"/>
        <end position="197"/>
    </location>
    <ligand>
        <name>CTP</name>
        <dbReference type="ChEBI" id="CHEBI:37563"/>
        <note>allosteric inhibitor</note>
    </ligand>
</feature>
<feature type="binding site" evidence="1">
    <location>
        <begin position="192"/>
        <end position="197"/>
    </location>
    <ligand>
        <name>UTP</name>
        <dbReference type="ChEBI" id="CHEBI:46398"/>
    </ligand>
</feature>
<feature type="binding site" evidence="1">
    <location>
        <position position="228"/>
    </location>
    <ligand>
        <name>CTP</name>
        <dbReference type="ChEBI" id="CHEBI:37563"/>
        <note>allosteric inhibitor</note>
    </ligand>
</feature>
<feature type="binding site" evidence="1">
    <location>
        <position position="228"/>
    </location>
    <ligand>
        <name>UTP</name>
        <dbReference type="ChEBI" id="CHEBI:46398"/>
    </ligand>
</feature>
<feature type="binding site" evidence="1">
    <location>
        <position position="361"/>
    </location>
    <ligand>
        <name>L-glutamine</name>
        <dbReference type="ChEBI" id="CHEBI:58359"/>
    </ligand>
</feature>
<feature type="binding site" evidence="1">
    <location>
        <begin position="389"/>
        <end position="392"/>
    </location>
    <ligand>
        <name>L-glutamine</name>
        <dbReference type="ChEBI" id="CHEBI:58359"/>
    </ligand>
</feature>
<feature type="binding site" evidence="1">
    <location>
        <position position="412"/>
    </location>
    <ligand>
        <name>L-glutamine</name>
        <dbReference type="ChEBI" id="CHEBI:58359"/>
    </ligand>
</feature>
<feature type="binding site" evidence="1">
    <location>
        <position position="477"/>
    </location>
    <ligand>
        <name>L-glutamine</name>
        <dbReference type="ChEBI" id="CHEBI:58359"/>
    </ligand>
</feature>
<reference key="1">
    <citation type="submission" date="2008-01" db="EMBL/GenBank/DDBJ databases">
        <title>Complete sequence of chromosome of Caulobacter sp. K31.</title>
        <authorList>
            <consortium name="US DOE Joint Genome Institute"/>
            <person name="Copeland A."/>
            <person name="Lucas S."/>
            <person name="Lapidus A."/>
            <person name="Barry K."/>
            <person name="Glavina del Rio T."/>
            <person name="Dalin E."/>
            <person name="Tice H."/>
            <person name="Pitluck S."/>
            <person name="Bruce D."/>
            <person name="Goodwin L."/>
            <person name="Thompson L.S."/>
            <person name="Brettin T."/>
            <person name="Detter J.C."/>
            <person name="Han C."/>
            <person name="Schmutz J."/>
            <person name="Larimer F."/>
            <person name="Land M."/>
            <person name="Hauser L."/>
            <person name="Kyrpides N."/>
            <person name="Kim E."/>
            <person name="Stephens C."/>
            <person name="Richardson P."/>
        </authorList>
    </citation>
    <scope>NUCLEOTIDE SEQUENCE [LARGE SCALE GENOMIC DNA]</scope>
    <source>
        <strain>K31</strain>
    </source>
</reference>
<proteinExistence type="inferred from homology"/>
<comment type="function">
    <text evidence="1">Catalyzes the ATP-dependent amination of UTP to CTP with either L-glutamine or ammonia as the source of nitrogen. Regulates intracellular CTP levels through interactions with the four ribonucleotide triphosphates.</text>
</comment>
<comment type="catalytic activity">
    <reaction evidence="1">
        <text>UTP + L-glutamine + ATP + H2O = CTP + L-glutamate + ADP + phosphate + 2 H(+)</text>
        <dbReference type="Rhea" id="RHEA:26426"/>
        <dbReference type="ChEBI" id="CHEBI:15377"/>
        <dbReference type="ChEBI" id="CHEBI:15378"/>
        <dbReference type="ChEBI" id="CHEBI:29985"/>
        <dbReference type="ChEBI" id="CHEBI:30616"/>
        <dbReference type="ChEBI" id="CHEBI:37563"/>
        <dbReference type="ChEBI" id="CHEBI:43474"/>
        <dbReference type="ChEBI" id="CHEBI:46398"/>
        <dbReference type="ChEBI" id="CHEBI:58359"/>
        <dbReference type="ChEBI" id="CHEBI:456216"/>
        <dbReference type="EC" id="6.3.4.2"/>
    </reaction>
</comment>
<comment type="catalytic activity">
    <reaction evidence="1">
        <text>L-glutamine + H2O = L-glutamate + NH4(+)</text>
        <dbReference type="Rhea" id="RHEA:15889"/>
        <dbReference type="ChEBI" id="CHEBI:15377"/>
        <dbReference type="ChEBI" id="CHEBI:28938"/>
        <dbReference type="ChEBI" id="CHEBI:29985"/>
        <dbReference type="ChEBI" id="CHEBI:58359"/>
    </reaction>
</comment>
<comment type="catalytic activity">
    <reaction evidence="1">
        <text>UTP + NH4(+) + ATP = CTP + ADP + phosphate + 2 H(+)</text>
        <dbReference type="Rhea" id="RHEA:16597"/>
        <dbReference type="ChEBI" id="CHEBI:15378"/>
        <dbReference type="ChEBI" id="CHEBI:28938"/>
        <dbReference type="ChEBI" id="CHEBI:30616"/>
        <dbReference type="ChEBI" id="CHEBI:37563"/>
        <dbReference type="ChEBI" id="CHEBI:43474"/>
        <dbReference type="ChEBI" id="CHEBI:46398"/>
        <dbReference type="ChEBI" id="CHEBI:456216"/>
    </reaction>
</comment>
<comment type="activity regulation">
    <text evidence="1">Allosterically activated by GTP, when glutamine is the substrate; GTP has no effect on the reaction when ammonia is the substrate. The allosteric effector GTP functions by stabilizing the protein conformation that binds the tetrahedral intermediate(s) formed during glutamine hydrolysis. Inhibited by the product CTP, via allosteric rather than competitive inhibition.</text>
</comment>
<comment type="pathway">
    <text evidence="1">Pyrimidine metabolism; CTP biosynthesis via de novo pathway; CTP from UDP: step 2/2.</text>
</comment>
<comment type="subunit">
    <text evidence="1">Homotetramer.</text>
</comment>
<comment type="miscellaneous">
    <text evidence="1">CTPSs have evolved a hybrid strategy for distinguishing between UTP and CTP. The overlapping regions of the product feedback inhibitory and substrate sites recognize a common feature in both compounds, the triphosphate moiety. To differentiate isosteric substrate and product pyrimidine rings, an additional pocket far from the expected kinase/ligase catalytic site, specifically recognizes the cytosine and ribose portions of the product inhibitor.</text>
</comment>
<comment type="similarity">
    <text evidence="1">Belongs to the CTP synthase family.</text>
</comment>
<name>PYRG_CAUSK</name>
<protein>
    <recommendedName>
        <fullName evidence="1">CTP synthase</fullName>
        <ecNumber evidence="1">6.3.4.2</ecNumber>
    </recommendedName>
    <alternativeName>
        <fullName evidence="1">Cytidine 5'-triphosphate synthase</fullName>
    </alternativeName>
    <alternativeName>
        <fullName evidence="1">Cytidine triphosphate synthetase</fullName>
        <shortName evidence="1">CTP synthetase</shortName>
        <shortName evidence="1">CTPS</shortName>
    </alternativeName>
    <alternativeName>
        <fullName evidence="1">UTP--ammonia ligase</fullName>
    </alternativeName>
</protein>
<gene>
    <name evidence="1" type="primary">pyrG</name>
    <name type="ordered locus">Caul_2765</name>
</gene>
<dbReference type="EC" id="6.3.4.2" evidence="1"/>
<dbReference type="EMBL" id="CP000927">
    <property type="protein sequence ID" value="ABZ71892.1"/>
    <property type="molecule type" value="Genomic_DNA"/>
</dbReference>
<dbReference type="SMR" id="B0SYY1"/>
<dbReference type="STRING" id="366602.Caul_2765"/>
<dbReference type="MEROPS" id="C26.964"/>
<dbReference type="KEGG" id="cak:Caul_2765"/>
<dbReference type="eggNOG" id="COG0504">
    <property type="taxonomic scope" value="Bacteria"/>
</dbReference>
<dbReference type="HOGENOM" id="CLU_011675_5_0_5"/>
<dbReference type="OrthoDB" id="9801107at2"/>
<dbReference type="UniPathway" id="UPA00159">
    <property type="reaction ID" value="UER00277"/>
</dbReference>
<dbReference type="GO" id="GO:0005829">
    <property type="term" value="C:cytosol"/>
    <property type="evidence" value="ECO:0007669"/>
    <property type="project" value="TreeGrafter"/>
</dbReference>
<dbReference type="GO" id="GO:0005524">
    <property type="term" value="F:ATP binding"/>
    <property type="evidence" value="ECO:0007669"/>
    <property type="project" value="UniProtKB-KW"/>
</dbReference>
<dbReference type="GO" id="GO:0003883">
    <property type="term" value="F:CTP synthase activity"/>
    <property type="evidence" value="ECO:0007669"/>
    <property type="project" value="UniProtKB-UniRule"/>
</dbReference>
<dbReference type="GO" id="GO:0004359">
    <property type="term" value="F:glutaminase activity"/>
    <property type="evidence" value="ECO:0007669"/>
    <property type="project" value="RHEA"/>
</dbReference>
<dbReference type="GO" id="GO:0042802">
    <property type="term" value="F:identical protein binding"/>
    <property type="evidence" value="ECO:0007669"/>
    <property type="project" value="TreeGrafter"/>
</dbReference>
<dbReference type="GO" id="GO:0046872">
    <property type="term" value="F:metal ion binding"/>
    <property type="evidence" value="ECO:0007669"/>
    <property type="project" value="UniProtKB-KW"/>
</dbReference>
<dbReference type="GO" id="GO:0044210">
    <property type="term" value="P:'de novo' CTP biosynthetic process"/>
    <property type="evidence" value="ECO:0007669"/>
    <property type="project" value="UniProtKB-UniRule"/>
</dbReference>
<dbReference type="GO" id="GO:0019856">
    <property type="term" value="P:pyrimidine nucleobase biosynthetic process"/>
    <property type="evidence" value="ECO:0007669"/>
    <property type="project" value="TreeGrafter"/>
</dbReference>
<dbReference type="CDD" id="cd03113">
    <property type="entry name" value="CTPS_N"/>
    <property type="match status" value="1"/>
</dbReference>
<dbReference type="CDD" id="cd01746">
    <property type="entry name" value="GATase1_CTP_Synthase"/>
    <property type="match status" value="1"/>
</dbReference>
<dbReference type="FunFam" id="3.40.50.300:FF:000009">
    <property type="entry name" value="CTP synthase"/>
    <property type="match status" value="1"/>
</dbReference>
<dbReference type="FunFam" id="3.40.50.880:FF:000002">
    <property type="entry name" value="CTP synthase"/>
    <property type="match status" value="1"/>
</dbReference>
<dbReference type="Gene3D" id="3.40.50.880">
    <property type="match status" value="1"/>
</dbReference>
<dbReference type="Gene3D" id="3.40.50.300">
    <property type="entry name" value="P-loop containing nucleotide triphosphate hydrolases"/>
    <property type="match status" value="1"/>
</dbReference>
<dbReference type="HAMAP" id="MF_01227">
    <property type="entry name" value="PyrG"/>
    <property type="match status" value="1"/>
</dbReference>
<dbReference type="InterPro" id="IPR029062">
    <property type="entry name" value="Class_I_gatase-like"/>
</dbReference>
<dbReference type="InterPro" id="IPR004468">
    <property type="entry name" value="CTP_synthase"/>
</dbReference>
<dbReference type="InterPro" id="IPR017456">
    <property type="entry name" value="CTP_synthase_N"/>
</dbReference>
<dbReference type="InterPro" id="IPR017926">
    <property type="entry name" value="GATASE"/>
</dbReference>
<dbReference type="InterPro" id="IPR033828">
    <property type="entry name" value="GATase1_CTP_Synthase"/>
</dbReference>
<dbReference type="InterPro" id="IPR027417">
    <property type="entry name" value="P-loop_NTPase"/>
</dbReference>
<dbReference type="NCBIfam" id="NF003792">
    <property type="entry name" value="PRK05380.1"/>
    <property type="match status" value="1"/>
</dbReference>
<dbReference type="NCBIfam" id="TIGR00337">
    <property type="entry name" value="PyrG"/>
    <property type="match status" value="1"/>
</dbReference>
<dbReference type="PANTHER" id="PTHR11550">
    <property type="entry name" value="CTP SYNTHASE"/>
    <property type="match status" value="1"/>
</dbReference>
<dbReference type="PANTHER" id="PTHR11550:SF0">
    <property type="entry name" value="CTP SYNTHASE-RELATED"/>
    <property type="match status" value="1"/>
</dbReference>
<dbReference type="Pfam" id="PF06418">
    <property type="entry name" value="CTP_synth_N"/>
    <property type="match status" value="1"/>
</dbReference>
<dbReference type="Pfam" id="PF00117">
    <property type="entry name" value="GATase"/>
    <property type="match status" value="1"/>
</dbReference>
<dbReference type="SUPFAM" id="SSF52317">
    <property type="entry name" value="Class I glutamine amidotransferase-like"/>
    <property type="match status" value="1"/>
</dbReference>
<dbReference type="SUPFAM" id="SSF52540">
    <property type="entry name" value="P-loop containing nucleoside triphosphate hydrolases"/>
    <property type="match status" value="1"/>
</dbReference>
<dbReference type="PROSITE" id="PS51273">
    <property type="entry name" value="GATASE_TYPE_1"/>
    <property type="match status" value="1"/>
</dbReference>
<keyword id="KW-0067">ATP-binding</keyword>
<keyword id="KW-0315">Glutamine amidotransferase</keyword>
<keyword id="KW-0436">Ligase</keyword>
<keyword id="KW-0460">Magnesium</keyword>
<keyword id="KW-0479">Metal-binding</keyword>
<keyword id="KW-0547">Nucleotide-binding</keyword>
<keyword id="KW-0665">Pyrimidine biosynthesis</keyword>
<evidence type="ECO:0000255" key="1">
    <source>
        <dbReference type="HAMAP-Rule" id="MF_01227"/>
    </source>
</evidence>
<sequence length="550" mass="60567">MTRYIFITGGVVSSLGKGLASAALGALLQARGYKVRLRKLDPYLNVDPGTMSPYQHGEVFVTDDGAETDLDLGHYERFTGVSATKADNITTGQIYKTIIEKERRGDYLGATVQVIPHVTNEIKDFILSPAMDETGAKPVDFVLVEIGGTVGDIEGLPFFEAIRQLRQDLPRNQSCYVHLTLLPFIKTAGEMKTKPTQHSVKELRSIGIQPDILLCRCEQEIPVEEKRKIAQFCNVRPSAVIQAMDSSSIYAVPIDYHQEGLDAEVLDVFGMHDAPKPDLSRWEAIDQTVNHPDGEVTIAVVGKYTVLKDAYKSLIEALHHGGLANKVKVNLDWVESETFEGDEGAAAARLENAHAIMVPGGFGERGAEGKIRAAQFARERKVPYFGICFGMQMAVIETLRNVAGIKDASSSEFGPTERPVVGIMTEWIKGNETVQRRANDDLGGTMRLGAYDAVLTPGSKVAQIYGGTAISERHRHRYEVNIGYAHRMEESGLKLTGRSPDGVLPEIVEREDHPWFIGVQYHPELKSRPFAPHPLFASFIAAAKEQGRLV</sequence>